<organism>
    <name type="scientific">Vaccinia virus (strain L-IVP)</name>
    <name type="common">VACV</name>
    <dbReference type="NCBI Taxonomy" id="31531"/>
    <lineage>
        <taxon>Viruses</taxon>
        <taxon>Varidnaviria</taxon>
        <taxon>Bamfordvirae</taxon>
        <taxon>Nucleocytoviricota</taxon>
        <taxon>Pokkesviricetes</taxon>
        <taxon>Chitovirales</taxon>
        <taxon>Poxviridae</taxon>
        <taxon>Chordopoxvirinae</taxon>
        <taxon>Orthopoxvirus</taxon>
        <taxon>Vaccinia virus</taxon>
    </lineage>
</organism>
<keyword id="KW-0903">Direct protein sequencing</keyword>
<keyword id="KW-0945">Host-virus interaction</keyword>
<keyword id="KW-0426">Late protein</keyword>
<keyword id="KW-0472">Membrane</keyword>
<keyword id="KW-1161">Viral attachment to host cell</keyword>
<keyword id="KW-0261">Viral envelope protein</keyword>
<keyword id="KW-0946">Virion</keyword>
<keyword id="KW-1160">Virus entry into host cell</keyword>
<reference key="1">
    <citation type="journal article" date="1992" name="Mol. Biol. (Mosk.)">
        <title>Identification of the gene for the immunodominant p35 protein from vaccinia virus.</title>
        <authorList>
            <person name="Zinov'Ev V.V."/>
            <person name="Ovechnika L.G."/>
            <person name="Matskova L.V."/>
            <person name="Balakhnin S.M."/>
            <person name="Malygin E.G."/>
            <person name="Chertov O.Y."/>
            <person name="Telezhinskaya I.N."/>
            <person name="Zaitseva E.V."/>
            <person name="Golubeva T.B."/>
        </authorList>
    </citation>
    <scope>PROTEIN SEQUENCE</scope>
</reference>
<reference key="2">
    <citation type="journal article" date="1994" name="Gene">
        <title>Identification of the gene encoding vaccinia virus immunodominant protein p35.</title>
        <authorList>
            <person name="Zinoviev V.V."/>
            <person name="Tchikaev N.A."/>
            <person name="Chertov O.Y.U."/>
            <person name="Malygin E.G."/>
        </authorList>
    </citation>
    <scope>IDENTIFICATION</scope>
</reference>
<gene>
    <name type="primary">OPG108</name>
    <name type="ORF">H3L</name>
</gene>
<sequence length="56" mass="6603">PEKRNVVVVKDDPDHYKDYAHDKKIDXXXRFIITGNKVKTEKINRQILDNAAKYVE</sequence>
<proteinExistence type="evidence at protein level"/>
<feature type="chain" id="PRO_0000099207" description="Envelope protein H3">
    <location>
        <begin position="1" status="less than"/>
        <end position="56" status="greater than"/>
    </location>
</feature>
<feature type="non-consecutive residues" evidence="3">
    <location>
        <begin position="20"/>
        <end position="21"/>
    </location>
</feature>
<feature type="non-consecutive residues" evidence="3">
    <location>
        <begin position="41"/>
        <end position="42"/>
    </location>
</feature>
<feature type="non-terminal residue">
    <location>
        <position position="1"/>
    </location>
</feature>
<feature type="non-terminal residue">
    <location>
        <position position="56"/>
    </location>
</feature>
<organismHost>
    <name type="scientific">Homo sapiens</name>
    <name type="common">Human</name>
    <dbReference type="NCBI Taxonomy" id="9606"/>
</organismHost>
<comment type="function">
    <text evidence="1 2">Envelope protein that binds to heparan sulfate on the cell surface and might provide virion attachment to target cell.</text>
</comment>
<comment type="subcellular location">
    <subcellularLocation>
        <location evidence="2">Virion membrane</location>
        <topology evidence="2">Single-pass membrane protein</topology>
    </subcellularLocation>
    <text evidence="2">Component of the mature virion (MV) membrane. Becomes membrane associated presumably during virus maturation. The mature virion is located in the cytoplasm of infected cells and is probably released by cell lysis.</text>
</comment>
<comment type="induction">
    <text>Expressed in the late phase of the viral replicative cycle.</text>
</comment>
<comment type="PTM">
    <text evidence="2">Does not contain disulfide bonds.</text>
</comment>
<comment type="miscellaneous">
    <text evidence="1">Immunodominant protein.</text>
</comment>
<comment type="similarity">
    <text evidence="3">Belongs to the orthopoxvirus OPG108 family.</text>
</comment>
<protein>
    <recommendedName>
        <fullName>Envelope protein H3</fullName>
    </recommendedName>
    <alternativeName>
        <fullName>Ag35</fullName>
    </alternativeName>
    <alternativeName>
        <fullName>Virion envelope protein p35</fullName>
    </alternativeName>
</protein>
<evidence type="ECO:0000250" key="1"/>
<evidence type="ECO:0000250" key="2">
    <source>
        <dbReference type="UniProtKB" id="P07240"/>
    </source>
</evidence>
<evidence type="ECO:0000305" key="3"/>
<dbReference type="GO" id="GO:0016020">
    <property type="term" value="C:membrane"/>
    <property type="evidence" value="ECO:0007669"/>
    <property type="project" value="UniProtKB-KW"/>
</dbReference>
<dbReference type="GO" id="GO:0019031">
    <property type="term" value="C:viral envelope"/>
    <property type="evidence" value="ECO:0007669"/>
    <property type="project" value="UniProtKB-KW"/>
</dbReference>
<dbReference type="GO" id="GO:0055036">
    <property type="term" value="C:virion membrane"/>
    <property type="evidence" value="ECO:0007669"/>
    <property type="project" value="UniProtKB-SubCell"/>
</dbReference>
<dbReference type="GO" id="GO:0046718">
    <property type="term" value="P:symbiont entry into host cell"/>
    <property type="evidence" value="ECO:0007669"/>
    <property type="project" value="UniProtKB-KW"/>
</dbReference>
<dbReference type="GO" id="GO:0019062">
    <property type="term" value="P:virion attachment to host cell"/>
    <property type="evidence" value="ECO:0007669"/>
    <property type="project" value="UniProtKB-KW"/>
</dbReference>
<accession>P30895</accession>
<name>PG108_VACCP</name>